<organism>
    <name type="scientific">Bordetella bronchiseptica (strain ATCC BAA-588 / NCTC 13252 / RB50)</name>
    <name type="common">Alcaligenes bronchisepticus</name>
    <dbReference type="NCBI Taxonomy" id="257310"/>
    <lineage>
        <taxon>Bacteria</taxon>
        <taxon>Pseudomonadati</taxon>
        <taxon>Pseudomonadota</taxon>
        <taxon>Betaproteobacteria</taxon>
        <taxon>Burkholderiales</taxon>
        <taxon>Alcaligenaceae</taxon>
        <taxon>Bordetella</taxon>
    </lineage>
</organism>
<accession>Q7WF46</accession>
<name>COAE_BORBR</name>
<sequence length="214" mass="22588">MYKIGLTGGIGSGKSRVADMLAEWGASVIDADEISHALTAPGGAAMPAIAREFGPQAVAADGALDRAWMRDLVFREPAARGRLEALLHPLIGLHTEQAAAQARGLYLVFVVPLLVESGRWRGRVDRICVVDCDPATQIARVQKRSGLTEPAIRRIMAAQAARATRLEAADDVIVNDGATSPDTLRARARTLHDRWLALAGAASQPGGKAAGTPE</sequence>
<evidence type="ECO:0000255" key="1">
    <source>
        <dbReference type="HAMAP-Rule" id="MF_00376"/>
    </source>
</evidence>
<evidence type="ECO:0000305" key="2"/>
<proteinExistence type="inferred from homology"/>
<gene>
    <name evidence="1" type="primary">coaE</name>
    <name type="ordered locus">BB4434</name>
</gene>
<reference key="1">
    <citation type="journal article" date="2003" name="Nat. Genet.">
        <title>Comparative analysis of the genome sequences of Bordetella pertussis, Bordetella parapertussis and Bordetella bronchiseptica.</title>
        <authorList>
            <person name="Parkhill J."/>
            <person name="Sebaihia M."/>
            <person name="Preston A."/>
            <person name="Murphy L.D."/>
            <person name="Thomson N.R."/>
            <person name="Harris D.E."/>
            <person name="Holden M.T.G."/>
            <person name="Churcher C.M."/>
            <person name="Bentley S.D."/>
            <person name="Mungall K.L."/>
            <person name="Cerdeno-Tarraga A.-M."/>
            <person name="Temple L."/>
            <person name="James K.D."/>
            <person name="Harris B."/>
            <person name="Quail M.A."/>
            <person name="Achtman M."/>
            <person name="Atkin R."/>
            <person name="Baker S."/>
            <person name="Basham D."/>
            <person name="Bason N."/>
            <person name="Cherevach I."/>
            <person name="Chillingworth T."/>
            <person name="Collins M."/>
            <person name="Cronin A."/>
            <person name="Davis P."/>
            <person name="Doggett J."/>
            <person name="Feltwell T."/>
            <person name="Goble A."/>
            <person name="Hamlin N."/>
            <person name="Hauser H."/>
            <person name="Holroyd S."/>
            <person name="Jagels K."/>
            <person name="Leather S."/>
            <person name="Moule S."/>
            <person name="Norberczak H."/>
            <person name="O'Neil S."/>
            <person name="Ormond D."/>
            <person name="Price C."/>
            <person name="Rabbinowitsch E."/>
            <person name="Rutter S."/>
            <person name="Sanders M."/>
            <person name="Saunders D."/>
            <person name="Seeger K."/>
            <person name="Sharp S."/>
            <person name="Simmonds M."/>
            <person name="Skelton J."/>
            <person name="Squares R."/>
            <person name="Squares S."/>
            <person name="Stevens K."/>
            <person name="Unwin L."/>
            <person name="Whitehead S."/>
            <person name="Barrell B.G."/>
            <person name="Maskell D.J."/>
        </authorList>
    </citation>
    <scope>NUCLEOTIDE SEQUENCE [LARGE SCALE GENOMIC DNA]</scope>
    <source>
        <strain>ATCC BAA-588 / NCTC 13252 / RB50</strain>
    </source>
</reference>
<protein>
    <recommendedName>
        <fullName evidence="1">Dephospho-CoA kinase</fullName>
        <ecNumber evidence="1">2.7.1.24</ecNumber>
    </recommendedName>
    <alternativeName>
        <fullName evidence="1">Dephosphocoenzyme A kinase</fullName>
    </alternativeName>
</protein>
<feature type="chain" id="PRO_0000172912" description="Dephospho-CoA kinase">
    <location>
        <begin position="1"/>
        <end position="214"/>
    </location>
</feature>
<feature type="domain" description="DPCK" evidence="1">
    <location>
        <begin position="3"/>
        <end position="202"/>
    </location>
</feature>
<feature type="binding site" evidence="1">
    <location>
        <begin position="11"/>
        <end position="16"/>
    </location>
    <ligand>
        <name>ATP</name>
        <dbReference type="ChEBI" id="CHEBI:30616"/>
    </ligand>
</feature>
<dbReference type="EC" id="2.7.1.24" evidence="1"/>
<dbReference type="EMBL" id="BX640450">
    <property type="protein sequence ID" value="CAE34797.1"/>
    <property type="status" value="ALT_INIT"/>
    <property type="molecule type" value="Genomic_DNA"/>
</dbReference>
<dbReference type="SMR" id="Q7WF46"/>
<dbReference type="KEGG" id="bbr:BB4434"/>
<dbReference type="eggNOG" id="COG0237">
    <property type="taxonomic scope" value="Bacteria"/>
</dbReference>
<dbReference type="HOGENOM" id="CLU_057180_1_2_4"/>
<dbReference type="UniPathway" id="UPA00241">
    <property type="reaction ID" value="UER00356"/>
</dbReference>
<dbReference type="Proteomes" id="UP000001027">
    <property type="component" value="Chromosome"/>
</dbReference>
<dbReference type="GO" id="GO:0005737">
    <property type="term" value="C:cytoplasm"/>
    <property type="evidence" value="ECO:0007669"/>
    <property type="project" value="UniProtKB-SubCell"/>
</dbReference>
<dbReference type="GO" id="GO:0005524">
    <property type="term" value="F:ATP binding"/>
    <property type="evidence" value="ECO:0007669"/>
    <property type="project" value="UniProtKB-UniRule"/>
</dbReference>
<dbReference type="GO" id="GO:0004140">
    <property type="term" value="F:dephospho-CoA kinase activity"/>
    <property type="evidence" value="ECO:0007669"/>
    <property type="project" value="UniProtKB-UniRule"/>
</dbReference>
<dbReference type="GO" id="GO:0015937">
    <property type="term" value="P:coenzyme A biosynthetic process"/>
    <property type="evidence" value="ECO:0007669"/>
    <property type="project" value="UniProtKB-UniRule"/>
</dbReference>
<dbReference type="CDD" id="cd02022">
    <property type="entry name" value="DPCK"/>
    <property type="match status" value="1"/>
</dbReference>
<dbReference type="Gene3D" id="3.40.50.300">
    <property type="entry name" value="P-loop containing nucleotide triphosphate hydrolases"/>
    <property type="match status" value="1"/>
</dbReference>
<dbReference type="HAMAP" id="MF_00376">
    <property type="entry name" value="Dephospho_CoA_kinase"/>
    <property type="match status" value="1"/>
</dbReference>
<dbReference type="InterPro" id="IPR001977">
    <property type="entry name" value="Depp_CoAkinase"/>
</dbReference>
<dbReference type="InterPro" id="IPR027417">
    <property type="entry name" value="P-loop_NTPase"/>
</dbReference>
<dbReference type="NCBIfam" id="TIGR00152">
    <property type="entry name" value="dephospho-CoA kinase"/>
    <property type="match status" value="1"/>
</dbReference>
<dbReference type="PANTHER" id="PTHR10695:SF46">
    <property type="entry name" value="BIFUNCTIONAL COENZYME A SYNTHASE-RELATED"/>
    <property type="match status" value="1"/>
</dbReference>
<dbReference type="PANTHER" id="PTHR10695">
    <property type="entry name" value="DEPHOSPHO-COA KINASE-RELATED"/>
    <property type="match status" value="1"/>
</dbReference>
<dbReference type="Pfam" id="PF01121">
    <property type="entry name" value="CoaE"/>
    <property type="match status" value="1"/>
</dbReference>
<dbReference type="SUPFAM" id="SSF52540">
    <property type="entry name" value="P-loop containing nucleoside triphosphate hydrolases"/>
    <property type="match status" value="1"/>
</dbReference>
<dbReference type="PROSITE" id="PS51219">
    <property type="entry name" value="DPCK"/>
    <property type="match status" value="1"/>
</dbReference>
<keyword id="KW-0067">ATP-binding</keyword>
<keyword id="KW-0173">Coenzyme A biosynthesis</keyword>
<keyword id="KW-0963">Cytoplasm</keyword>
<keyword id="KW-0418">Kinase</keyword>
<keyword id="KW-0547">Nucleotide-binding</keyword>
<keyword id="KW-0808">Transferase</keyword>
<comment type="function">
    <text evidence="1">Catalyzes the phosphorylation of the 3'-hydroxyl group of dephosphocoenzyme A to form coenzyme A.</text>
</comment>
<comment type="catalytic activity">
    <reaction evidence="1">
        <text>3'-dephospho-CoA + ATP = ADP + CoA + H(+)</text>
        <dbReference type="Rhea" id="RHEA:18245"/>
        <dbReference type="ChEBI" id="CHEBI:15378"/>
        <dbReference type="ChEBI" id="CHEBI:30616"/>
        <dbReference type="ChEBI" id="CHEBI:57287"/>
        <dbReference type="ChEBI" id="CHEBI:57328"/>
        <dbReference type="ChEBI" id="CHEBI:456216"/>
        <dbReference type="EC" id="2.7.1.24"/>
    </reaction>
</comment>
<comment type="pathway">
    <text evidence="1">Cofactor biosynthesis; coenzyme A biosynthesis; CoA from (R)-pantothenate: step 5/5.</text>
</comment>
<comment type="subcellular location">
    <subcellularLocation>
        <location evidence="1">Cytoplasm</location>
    </subcellularLocation>
</comment>
<comment type="similarity">
    <text evidence="1">Belongs to the CoaE family.</text>
</comment>
<comment type="sequence caution" evidence="2">
    <conflict type="erroneous initiation">
        <sequence resource="EMBL-CDS" id="CAE34797"/>
    </conflict>
</comment>